<feature type="chain" id="PRO_0000121589" description="tRNA-specific 2-thiouridylase MnmA">
    <location>
        <begin position="1"/>
        <end position="368"/>
    </location>
</feature>
<feature type="region of interest" description="Interaction with target base in tRNA" evidence="1">
    <location>
        <begin position="97"/>
        <end position="99"/>
    </location>
</feature>
<feature type="region of interest" description="Interaction with tRNA" evidence="1">
    <location>
        <begin position="149"/>
        <end position="151"/>
    </location>
</feature>
<feature type="region of interest" description="Interaction with tRNA" evidence="1">
    <location>
        <begin position="311"/>
        <end position="312"/>
    </location>
</feature>
<feature type="active site" description="Nucleophile" evidence="1">
    <location>
        <position position="102"/>
    </location>
</feature>
<feature type="active site" description="Cysteine persulfide intermediate" evidence="1">
    <location>
        <position position="199"/>
    </location>
</feature>
<feature type="binding site" evidence="1">
    <location>
        <begin position="11"/>
        <end position="18"/>
    </location>
    <ligand>
        <name>ATP</name>
        <dbReference type="ChEBI" id="CHEBI:30616"/>
    </ligand>
</feature>
<feature type="binding site" evidence="1">
    <location>
        <position position="37"/>
    </location>
    <ligand>
        <name>ATP</name>
        <dbReference type="ChEBI" id="CHEBI:30616"/>
    </ligand>
</feature>
<feature type="binding site" evidence="1">
    <location>
        <position position="127"/>
    </location>
    <ligand>
        <name>ATP</name>
        <dbReference type="ChEBI" id="CHEBI:30616"/>
    </ligand>
</feature>
<feature type="site" description="Interaction with tRNA" evidence="1">
    <location>
        <position position="128"/>
    </location>
</feature>
<feature type="site" description="Interaction with tRNA" evidence="1">
    <location>
        <position position="344"/>
    </location>
</feature>
<feature type="disulfide bond" description="Alternate" evidence="1">
    <location>
        <begin position="102"/>
        <end position="199"/>
    </location>
</feature>
<sequence>MSETAKKVIVGMSGGVDSSVSAWLLQQQGYQVEGLFMKNWEEDDGEEYCTAAADLADAQAVCDKLGIELHTVNFAAEYWDNVFELFLAEYKAGRTPNPDILCNKEIKFKAFLEFAAEDLCADYIATGHYVRRAXVDGKSRLLRGLDSNKDQSYFLYTLSHEQIAQSLFPVGELEKPQVRKIAEDLGLVTAKKKDSTGICFIGERKFRKFLGRYLPAQPGKIITVDGDEIGEHQGLMYHTLGQRKGLGIGGTKDGTEEPWYVVDKDVENNILIVAQGHEHPRLMSVGLIAQQLHWVDREPFTGTMRCTVKTRYRQTDIPCTVKALDADRIEVIFDEPVAAVTPGQSAVFYNGEVCLGGGIIEQRLPLPV</sequence>
<name>MNMA_ECOL6</name>
<accession>Q8CXZ8</accession>
<evidence type="ECO:0000255" key="1">
    <source>
        <dbReference type="HAMAP-Rule" id="MF_00144"/>
    </source>
</evidence>
<evidence type="ECO:0000305" key="2"/>
<organism>
    <name type="scientific">Escherichia coli O6:H1 (strain CFT073 / ATCC 700928 / UPEC)</name>
    <dbReference type="NCBI Taxonomy" id="199310"/>
    <lineage>
        <taxon>Bacteria</taxon>
        <taxon>Pseudomonadati</taxon>
        <taxon>Pseudomonadota</taxon>
        <taxon>Gammaproteobacteria</taxon>
        <taxon>Enterobacterales</taxon>
        <taxon>Enterobacteriaceae</taxon>
        <taxon>Escherichia</taxon>
    </lineage>
</organism>
<dbReference type="EC" id="2.8.1.13" evidence="1"/>
<dbReference type="EMBL" id="AE014075">
    <property type="protein sequence ID" value="AAN79981.1"/>
    <property type="status" value="ALT_INIT"/>
    <property type="molecule type" value="Genomic_DNA"/>
</dbReference>
<dbReference type="RefSeq" id="WP_011076353.1">
    <property type="nucleotide sequence ID" value="NC_004431.1"/>
</dbReference>
<dbReference type="STRING" id="199310.c1512"/>
<dbReference type="KEGG" id="ecc:c1512"/>
<dbReference type="eggNOG" id="COG0482">
    <property type="taxonomic scope" value="Bacteria"/>
</dbReference>
<dbReference type="HOGENOM" id="CLU_035188_1_0_6"/>
<dbReference type="Proteomes" id="UP000001410">
    <property type="component" value="Chromosome"/>
</dbReference>
<dbReference type="GO" id="GO:0005737">
    <property type="term" value="C:cytoplasm"/>
    <property type="evidence" value="ECO:0007669"/>
    <property type="project" value="UniProtKB-SubCell"/>
</dbReference>
<dbReference type="GO" id="GO:0005524">
    <property type="term" value="F:ATP binding"/>
    <property type="evidence" value="ECO:0007669"/>
    <property type="project" value="UniProtKB-KW"/>
</dbReference>
<dbReference type="GO" id="GO:0000049">
    <property type="term" value="F:tRNA binding"/>
    <property type="evidence" value="ECO:0007669"/>
    <property type="project" value="UniProtKB-KW"/>
</dbReference>
<dbReference type="GO" id="GO:0103016">
    <property type="term" value="F:tRNA-uridine 2-sulfurtransferase activity"/>
    <property type="evidence" value="ECO:0007669"/>
    <property type="project" value="UniProtKB-EC"/>
</dbReference>
<dbReference type="GO" id="GO:0002143">
    <property type="term" value="P:tRNA wobble position uridine thiolation"/>
    <property type="evidence" value="ECO:0007669"/>
    <property type="project" value="TreeGrafter"/>
</dbReference>
<dbReference type="CDD" id="cd01998">
    <property type="entry name" value="MnmA_TRMU-like"/>
    <property type="match status" value="1"/>
</dbReference>
<dbReference type="FunFam" id="2.30.30.280:FF:000001">
    <property type="entry name" value="tRNA-specific 2-thiouridylase MnmA"/>
    <property type="match status" value="1"/>
</dbReference>
<dbReference type="FunFam" id="2.40.30.10:FF:000023">
    <property type="entry name" value="tRNA-specific 2-thiouridylase MnmA"/>
    <property type="match status" value="1"/>
</dbReference>
<dbReference type="FunFam" id="3.40.50.620:FF:000004">
    <property type="entry name" value="tRNA-specific 2-thiouridylase MnmA"/>
    <property type="match status" value="1"/>
</dbReference>
<dbReference type="Gene3D" id="2.30.30.280">
    <property type="entry name" value="Adenine nucleotide alpha hydrolases-like domains"/>
    <property type="match status" value="1"/>
</dbReference>
<dbReference type="Gene3D" id="3.40.50.620">
    <property type="entry name" value="HUPs"/>
    <property type="match status" value="1"/>
</dbReference>
<dbReference type="Gene3D" id="2.40.30.10">
    <property type="entry name" value="Translation factors"/>
    <property type="match status" value="1"/>
</dbReference>
<dbReference type="HAMAP" id="MF_00144">
    <property type="entry name" value="tRNA_thiouridyl_MnmA"/>
    <property type="match status" value="1"/>
</dbReference>
<dbReference type="InterPro" id="IPR004506">
    <property type="entry name" value="MnmA-like"/>
</dbReference>
<dbReference type="InterPro" id="IPR046885">
    <property type="entry name" value="MnmA-like_C"/>
</dbReference>
<dbReference type="InterPro" id="IPR046884">
    <property type="entry name" value="MnmA-like_central"/>
</dbReference>
<dbReference type="InterPro" id="IPR023382">
    <property type="entry name" value="MnmA-like_central_sf"/>
</dbReference>
<dbReference type="InterPro" id="IPR014729">
    <property type="entry name" value="Rossmann-like_a/b/a_fold"/>
</dbReference>
<dbReference type="NCBIfam" id="NF001138">
    <property type="entry name" value="PRK00143.1"/>
    <property type="match status" value="1"/>
</dbReference>
<dbReference type="NCBIfam" id="TIGR00420">
    <property type="entry name" value="trmU"/>
    <property type="match status" value="1"/>
</dbReference>
<dbReference type="PANTHER" id="PTHR11933:SF5">
    <property type="entry name" value="MITOCHONDRIAL TRNA-SPECIFIC 2-THIOURIDYLASE 1"/>
    <property type="match status" value="1"/>
</dbReference>
<dbReference type="PANTHER" id="PTHR11933">
    <property type="entry name" value="TRNA 5-METHYLAMINOMETHYL-2-THIOURIDYLATE -METHYLTRANSFERASE"/>
    <property type="match status" value="1"/>
</dbReference>
<dbReference type="Pfam" id="PF03054">
    <property type="entry name" value="tRNA_Me_trans"/>
    <property type="match status" value="1"/>
</dbReference>
<dbReference type="Pfam" id="PF20258">
    <property type="entry name" value="tRNA_Me_trans_C"/>
    <property type="match status" value="1"/>
</dbReference>
<dbReference type="Pfam" id="PF20259">
    <property type="entry name" value="tRNA_Me_trans_M"/>
    <property type="match status" value="1"/>
</dbReference>
<dbReference type="SUPFAM" id="SSF52402">
    <property type="entry name" value="Adenine nucleotide alpha hydrolases-like"/>
    <property type="match status" value="1"/>
</dbReference>
<keyword id="KW-0067">ATP-binding</keyword>
<keyword id="KW-0963">Cytoplasm</keyword>
<keyword id="KW-1015">Disulfide bond</keyword>
<keyword id="KW-0547">Nucleotide-binding</keyword>
<keyword id="KW-1185">Reference proteome</keyword>
<keyword id="KW-0694">RNA-binding</keyword>
<keyword id="KW-0808">Transferase</keyword>
<keyword id="KW-0819">tRNA processing</keyword>
<keyword id="KW-0820">tRNA-binding</keyword>
<proteinExistence type="inferred from homology"/>
<protein>
    <recommendedName>
        <fullName evidence="1">tRNA-specific 2-thiouridylase MnmA</fullName>
        <ecNumber evidence="1">2.8.1.13</ecNumber>
    </recommendedName>
</protein>
<comment type="function">
    <text evidence="1">Catalyzes the 2-thiolation of uridine at the wobble position (U34) of tRNA(Lys), tRNA(Glu) and tRNA(Gln), leading to the formation of s(2)U34, the first step of tRNA-mnm(5)s(2)U34 synthesis. Sulfur is provided by IscS, via a sulfur-relay system. Binds ATP and its substrate tRNAs.</text>
</comment>
<comment type="catalytic activity">
    <reaction evidence="1">
        <text>S-sulfanyl-L-cysteinyl-[protein] + uridine(34) in tRNA + AH2 + ATP = 2-thiouridine(34) in tRNA + L-cysteinyl-[protein] + A + AMP + diphosphate + H(+)</text>
        <dbReference type="Rhea" id="RHEA:47032"/>
        <dbReference type="Rhea" id="RHEA-COMP:10131"/>
        <dbReference type="Rhea" id="RHEA-COMP:11726"/>
        <dbReference type="Rhea" id="RHEA-COMP:11727"/>
        <dbReference type="Rhea" id="RHEA-COMP:11728"/>
        <dbReference type="ChEBI" id="CHEBI:13193"/>
        <dbReference type="ChEBI" id="CHEBI:15378"/>
        <dbReference type="ChEBI" id="CHEBI:17499"/>
        <dbReference type="ChEBI" id="CHEBI:29950"/>
        <dbReference type="ChEBI" id="CHEBI:30616"/>
        <dbReference type="ChEBI" id="CHEBI:33019"/>
        <dbReference type="ChEBI" id="CHEBI:61963"/>
        <dbReference type="ChEBI" id="CHEBI:65315"/>
        <dbReference type="ChEBI" id="CHEBI:87170"/>
        <dbReference type="ChEBI" id="CHEBI:456215"/>
        <dbReference type="EC" id="2.8.1.13"/>
    </reaction>
</comment>
<comment type="subunit">
    <text evidence="1">Interacts with TusE.</text>
</comment>
<comment type="subcellular location">
    <subcellularLocation>
        <location evidence="1">Cytoplasm</location>
    </subcellularLocation>
</comment>
<comment type="similarity">
    <text evidence="1">Belongs to the MnmA/TRMU family.</text>
</comment>
<comment type="sequence caution" evidence="2">
    <conflict type="erroneous initiation">
        <sequence resource="EMBL-CDS" id="AAN79981"/>
    </conflict>
</comment>
<gene>
    <name evidence="1" type="primary">mnmA</name>
    <name type="synonym">trmU</name>
    <name type="ordered locus">c1512</name>
</gene>
<reference key="1">
    <citation type="journal article" date="2002" name="Proc. Natl. Acad. Sci. U.S.A.">
        <title>Extensive mosaic structure revealed by the complete genome sequence of uropathogenic Escherichia coli.</title>
        <authorList>
            <person name="Welch R.A."/>
            <person name="Burland V."/>
            <person name="Plunkett G. III"/>
            <person name="Redford P."/>
            <person name="Roesch P."/>
            <person name="Rasko D."/>
            <person name="Buckles E.L."/>
            <person name="Liou S.-R."/>
            <person name="Boutin A."/>
            <person name="Hackett J."/>
            <person name="Stroud D."/>
            <person name="Mayhew G.F."/>
            <person name="Rose D.J."/>
            <person name="Zhou S."/>
            <person name="Schwartz D.C."/>
            <person name="Perna N.T."/>
            <person name="Mobley H.L.T."/>
            <person name="Donnenberg M.S."/>
            <person name="Blattner F.R."/>
        </authorList>
    </citation>
    <scope>NUCLEOTIDE SEQUENCE [LARGE SCALE GENOMIC DNA]</scope>
    <source>
        <strain>CFT073 / ATCC 700928 / UPEC</strain>
    </source>
</reference>